<dbReference type="EMBL" id="AY015642">
    <property type="protein sequence ID" value="AAG40950.1"/>
    <property type="molecule type" value="mRNA"/>
</dbReference>
<dbReference type="EMBL" id="AF284752">
    <property type="protein sequence ID" value="AAG59854.1"/>
    <property type="status" value="ALT_INIT"/>
    <property type="molecule type" value="mRNA"/>
</dbReference>
<dbReference type="EMBL" id="AK055643">
    <property type="protein sequence ID" value="BAG51546.1"/>
    <property type="molecule type" value="mRNA"/>
</dbReference>
<dbReference type="EMBL" id="AK296093">
    <property type="protein sequence ID" value="BAG58847.1"/>
    <property type="molecule type" value="mRNA"/>
</dbReference>
<dbReference type="EMBL" id="AL834356">
    <property type="protein sequence ID" value="CAD39021.1"/>
    <property type="status" value="ALT_INIT"/>
    <property type="molecule type" value="mRNA"/>
</dbReference>
<dbReference type="EMBL" id="AL137849">
    <property type="status" value="NOT_ANNOTATED_CDS"/>
    <property type="molecule type" value="Genomic_DNA"/>
</dbReference>
<dbReference type="EMBL" id="CH471089">
    <property type="protein sequence ID" value="EAW62713.1"/>
    <property type="molecule type" value="Genomic_DNA"/>
</dbReference>
<dbReference type="EMBL" id="BC002675">
    <property type="protein sequence ID" value="AAH02675.1"/>
    <property type="molecule type" value="mRNA"/>
</dbReference>
<dbReference type="EMBL" id="BC071621">
    <property type="protein sequence ID" value="AAH71621.1"/>
    <property type="molecule type" value="mRNA"/>
</dbReference>
<dbReference type="CCDS" id="CCDS35056.1">
    <molecule id="Q9BUE6-1"/>
</dbReference>
<dbReference type="RefSeq" id="NP_112202.2">
    <molecule id="Q9BUE6-1"/>
    <property type="nucleotide sequence ID" value="NM_030940.3"/>
</dbReference>
<dbReference type="SASBDB" id="Q9BUE6"/>
<dbReference type="SMR" id="Q9BUE6"/>
<dbReference type="BioGRID" id="123569">
    <property type="interactions" value="133"/>
</dbReference>
<dbReference type="ComplexPortal" id="CPX-2831">
    <property type="entry name" value="ISCA1-ISCA2 mitochondrial iron-sulfur protein assembly complex"/>
</dbReference>
<dbReference type="FunCoup" id="Q9BUE6">
    <property type="interactions" value="1891"/>
</dbReference>
<dbReference type="IntAct" id="Q9BUE6">
    <property type="interactions" value="84"/>
</dbReference>
<dbReference type="MINT" id="Q9BUE6"/>
<dbReference type="STRING" id="9606.ENSP00000365159"/>
<dbReference type="iPTMnet" id="Q9BUE6"/>
<dbReference type="PhosphoSitePlus" id="Q9BUE6"/>
<dbReference type="SwissPalm" id="Q9BUE6"/>
<dbReference type="BioMuta" id="ISCA1"/>
<dbReference type="DMDM" id="74761270"/>
<dbReference type="jPOST" id="Q9BUE6"/>
<dbReference type="MassIVE" id="Q9BUE6"/>
<dbReference type="PaxDb" id="9606-ENSP00000365159"/>
<dbReference type="PeptideAtlas" id="Q9BUE6"/>
<dbReference type="ProteomicsDB" id="79080">
    <molecule id="Q9BUE6-1"/>
</dbReference>
<dbReference type="Pumba" id="Q9BUE6"/>
<dbReference type="Antibodypedia" id="27810">
    <property type="antibodies" value="64 antibodies from 15 providers"/>
</dbReference>
<dbReference type="DNASU" id="81689"/>
<dbReference type="Ensembl" id="ENST00000375991.9">
    <molecule id="Q9BUE6-1"/>
    <property type="protein sequence ID" value="ENSP00000365159.4"/>
    <property type="gene ID" value="ENSG00000135070.15"/>
</dbReference>
<dbReference type="GeneID" id="81689"/>
<dbReference type="KEGG" id="hsa:81689"/>
<dbReference type="MANE-Select" id="ENST00000375991.9">
    <property type="protein sequence ID" value="ENSP00000365159.4"/>
    <property type="RefSeq nucleotide sequence ID" value="NM_030940.4"/>
    <property type="RefSeq protein sequence ID" value="NP_112202.2"/>
</dbReference>
<dbReference type="UCSC" id="uc004aop.4">
    <molecule id="Q9BUE6-1"/>
    <property type="organism name" value="human"/>
</dbReference>
<dbReference type="AGR" id="HGNC:28660"/>
<dbReference type="CTD" id="81689"/>
<dbReference type="DisGeNET" id="81689"/>
<dbReference type="GeneCards" id="ISCA1"/>
<dbReference type="GeneReviews" id="ISCA1"/>
<dbReference type="HGNC" id="HGNC:28660">
    <property type="gene designation" value="ISCA1"/>
</dbReference>
<dbReference type="HPA" id="ENSG00000135070">
    <property type="expression patterns" value="Low tissue specificity"/>
</dbReference>
<dbReference type="MalaCards" id="ISCA1"/>
<dbReference type="MIM" id="611006">
    <property type="type" value="gene"/>
</dbReference>
<dbReference type="MIM" id="617613">
    <property type="type" value="phenotype"/>
</dbReference>
<dbReference type="neXtProt" id="NX_Q9BUE6"/>
<dbReference type="OpenTargets" id="ENSG00000135070"/>
<dbReference type="Orphanet" id="569274">
    <property type="disease" value="Multiple mitochondrial dysfunctions syndrome type 5"/>
</dbReference>
<dbReference type="PharmGKB" id="PA162392301"/>
<dbReference type="VEuPathDB" id="HostDB:ENSG00000135070"/>
<dbReference type="eggNOG" id="KOG1120">
    <property type="taxonomic scope" value="Eukaryota"/>
</dbReference>
<dbReference type="GeneTree" id="ENSGT00490000043385"/>
<dbReference type="HOGENOM" id="CLU_069054_4_0_1"/>
<dbReference type="InParanoid" id="Q9BUE6"/>
<dbReference type="OMA" id="LYIYGMQ"/>
<dbReference type="OrthoDB" id="333486at2759"/>
<dbReference type="PAN-GO" id="Q9BUE6">
    <property type="GO annotations" value="5 GO annotations based on evolutionary models"/>
</dbReference>
<dbReference type="PhylomeDB" id="Q9BUE6"/>
<dbReference type="TreeFam" id="TF314956"/>
<dbReference type="PathwayCommons" id="Q9BUE6"/>
<dbReference type="Reactome" id="R-HSA-1362409">
    <property type="pathway name" value="Mitochondrial iron-sulfur cluster biogenesis"/>
</dbReference>
<dbReference type="Reactome" id="R-HSA-9854311">
    <property type="pathway name" value="Maturation of TCA enzymes and regulation of TCA cycle"/>
</dbReference>
<dbReference type="SignaLink" id="Q9BUE6"/>
<dbReference type="BioGRID-ORCS" id="81689">
    <property type="hits" value="251 hits in 1116 CRISPR screens"/>
</dbReference>
<dbReference type="ChiTaRS" id="ISCA1">
    <property type="organism name" value="human"/>
</dbReference>
<dbReference type="GeneWiki" id="ISCA1"/>
<dbReference type="GenomeRNAi" id="81689"/>
<dbReference type="Pharos" id="Q9BUE6">
    <property type="development level" value="Tbio"/>
</dbReference>
<dbReference type="PRO" id="PR:Q9BUE6"/>
<dbReference type="Proteomes" id="UP000005640">
    <property type="component" value="Chromosome 9"/>
</dbReference>
<dbReference type="RNAct" id="Q9BUE6">
    <property type="molecule type" value="protein"/>
</dbReference>
<dbReference type="Bgee" id="ENSG00000135070">
    <property type="expression patterns" value="Expressed in endothelial cell and 206 other cell types or tissues"/>
</dbReference>
<dbReference type="ExpressionAtlas" id="Q9BUE6">
    <property type="expression patterns" value="baseline and differential"/>
</dbReference>
<dbReference type="GO" id="GO:0005737">
    <property type="term" value="C:cytoplasm"/>
    <property type="evidence" value="ECO:0000318"/>
    <property type="project" value="GO_Central"/>
</dbReference>
<dbReference type="GO" id="GO:0120510">
    <property type="term" value="C:mitochondrial [4Fe-4S] assembly complex"/>
    <property type="evidence" value="ECO:0000314"/>
    <property type="project" value="FlyBase"/>
</dbReference>
<dbReference type="GO" id="GO:0005759">
    <property type="term" value="C:mitochondrial matrix"/>
    <property type="evidence" value="ECO:0000304"/>
    <property type="project" value="Reactome"/>
</dbReference>
<dbReference type="GO" id="GO:0005739">
    <property type="term" value="C:mitochondrion"/>
    <property type="evidence" value="ECO:0006056"/>
    <property type="project" value="FlyBase"/>
</dbReference>
<dbReference type="GO" id="GO:0051537">
    <property type="term" value="F:2 iron, 2 sulfur cluster binding"/>
    <property type="evidence" value="ECO:0000318"/>
    <property type="project" value="GO_Central"/>
</dbReference>
<dbReference type="GO" id="GO:0046872">
    <property type="term" value="F:metal ion binding"/>
    <property type="evidence" value="ECO:0007669"/>
    <property type="project" value="UniProtKB-KW"/>
</dbReference>
<dbReference type="GO" id="GO:0016226">
    <property type="term" value="P:iron-sulfur cluster assembly"/>
    <property type="evidence" value="ECO:0000318"/>
    <property type="project" value="GO_Central"/>
</dbReference>
<dbReference type="FunFam" id="2.60.300.12:FF:000001">
    <property type="entry name" value="Iron-binding protein IscA"/>
    <property type="match status" value="1"/>
</dbReference>
<dbReference type="Gene3D" id="2.60.300.12">
    <property type="entry name" value="HesB-like domain"/>
    <property type="match status" value="1"/>
</dbReference>
<dbReference type="InterPro" id="IPR050322">
    <property type="entry name" value="Fe-S_cluster_asmbl/transfer"/>
</dbReference>
<dbReference type="InterPro" id="IPR000361">
    <property type="entry name" value="FeS_biogenesis"/>
</dbReference>
<dbReference type="InterPro" id="IPR016092">
    <property type="entry name" value="FeS_cluster_insertion"/>
</dbReference>
<dbReference type="InterPro" id="IPR017870">
    <property type="entry name" value="FeS_cluster_insertion_CS"/>
</dbReference>
<dbReference type="InterPro" id="IPR035903">
    <property type="entry name" value="HesB-like_dom_sf"/>
</dbReference>
<dbReference type="NCBIfam" id="TIGR00049">
    <property type="entry name" value="iron-sulfur cluster assembly accessory protein"/>
    <property type="match status" value="1"/>
</dbReference>
<dbReference type="PANTHER" id="PTHR10072:SF41">
    <property type="entry name" value="IRON-SULFUR CLUSTER ASSEMBLY 1 HOMOLOG, MITOCHONDRIAL"/>
    <property type="match status" value="1"/>
</dbReference>
<dbReference type="PANTHER" id="PTHR10072">
    <property type="entry name" value="IRON-SULFUR CLUSTER ASSEMBLY PROTEIN"/>
    <property type="match status" value="1"/>
</dbReference>
<dbReference type="Pfam" id="PF01521">
    <property type="entry name" value="Fe-S_biosyn"/>
    <property type="match status" value="1"/>
</dbReference>
<dbReference type="SUPFAM" id="SSF89360">
    <property type="entry name" value="HesB-like domain"/>
    <property type="match status" value="1"/>
</dbReference>
<dbReference type="PROSITE" id="PS01152">
    <property type="entry name" value="HESB"/>
    <property type="match status" value="1"/>
</dbReference>
<accession>Q9BUE6</accession>
<accession>B3KP34</accession>
<accession>B4DJI5</accession>
<accession>Q8ND75</accession>
<accession>Q9BZR2</accession>
<reference key="1">
    <citation type="journal article" date="2004" name="Biochim. Biophys. Acta">
        <title>hIscA: a protein implicated in the biogenesis of iron-sulfur clusters.</title>
        <authorList>
            <person name="Cozar-Castellano I."/>
            <person name="del Valle Machargo M."/>
            <person name="Trujillo E."/>
            <person name="Arteaga M.F."/>
            <person name="Gonzalez T."/>
            <person name="Martin-Vasallo P."/>
            <person name="Avila J."/>
        </authorList>
    </citation>
    <scope>NUCLEOTIDE SEQUENCE [MRNA] (ISOFORM 1)</scope>
    <scope>FUNCTION</scope>
    <scope>SUBCELLULAR LOCATION</scope>
    <scope>TISSUE SPECIFICITY</scope>
    <source>
        <tissue>Brain</tissue>
    </source>
</reference>
<reference key="2">
    <citation type="submission" date="2000-07" db="EMBL/GenBank/DDBJ databases">
        <authorList>
            <person name="Xu X."/>
            <person name="Yang Y."/>
            <person name="Gao G."/>
            <person name="Xiao H."/>
            <person name="Chen Z."/>
            <person name="Han Z."/>
        </authorList>
    </citation>
    <scope>NUCLEOTIDE SEQUENCE [LARGE SCALE MRNA] (ISOFORM 1)</scope>
    <source>
        <tissue>Liver cancer</tissue>
    </source>
</reference>
<reference key="3">
    <citation type="journal article" date="2004" name="Nat. Genet.">
        <title>Complete sequencing and characterization of 21,243 full-length human cDNAs.</title>
        <authorList>
            <person name="Ota T."/>
            <person name="Suzuki Y."/>
            <person name="Nishikawa T."/>
            <person name="Otsuki T."/>
            <person name="Sugiyama T."/>
            <person name="Irie R."/>
            <person name="Wakamatsu A."/>
            <person name="Hayashi K."/>
            <person name="Sato H."/>
            <person name="Nagai K."/>
            <person name="Kimura K."/>
            <person name="Makita H."/>
            <person name="Sekine M."/>
            <person name="Obayashi M."/>
            <person name="Nishi T."/>
            <person name="Shibahara T."/>
            <person name="Tanaka T."/>
            <person name="Ishii S."/>
            <person name="Yamamoto J."/>
            <person name="Saito K."/>
            <person name="Kawai Y."/>
            <person name="Isono Y."/>
            <person name="Nakamura Y."/>
            <person name="Nagahari K."/>
            <person name="Murakami K."/>
            <person name="Yasuda T."/>
            <person name="Iwayanagi T."/>
            <person name="Wagatsuma M."/>
            <person name="Shiratori A."/>
            <person name="Sudo H."/>
            <person name="Hosoiri T."/>
            <person name="Kaku Y."/>
            <person name="Kodaira H."/>
            <person name="Kondo H."/>
            <person name="Sugawara M."/>
            <person name="Takahashi M."/>
            <person name="Kanda K."/>
            <person name="Yokoi T."/>
            <person name="Furuya T."/>
            <person name="Kikkawa E."/>
            <person name="Omura Y."/>
            <person name="Abe K."/>
            <person name="Kamihara K."/>
            <person name="Katsuta N."/>
            <person name="Sato K."/>
            <person name="Tanikawa M."/>
            <person name="Yamazaki M."/>
            <person name="Ninomiya K."/>
            <person name="Ishibashi T."/>
            <person name="Yamashita H."/>
            <person name="Murakawa K."/>
            <person name="Fujimori K."/>
            <person name="Tanai H."/>
            <person name="Kimata M."/>
            <person name="Watanabe M."/>
            <person name="Hiraoka S."/>
            <person name="Chiba Y."/>
            <person name="Ishida S."/>
            <person name="Ono Y."/>
            <person name="Takiguchi S."/>
            <person name="Watanabe S."/>
            <person name="Yosida M."/>
            <person name="Hotuta T."/>
            <person name="Kusano J."/>
            <person name="Kanehori K."/>
            <person name="Takahashi-Fujii A."/>
            <person name="Hara H."/>
            <person name="Tanase T.-O."/>
            <person name="Nomura Y."/>
            <person name="Togiya S."/>
            <person name="Komai F."/>
            <person name="Hara R."/>
            <person name="Takeuchi K."/>
            <person name="Arita M."/>
            <person name="Imose N."/>
            <person name="Musashino K."/>
            <person name="Yuuki H."/>
            <person name="Oshima A."/>
            <person name="Sasaki N."/>
            <person name="Aotsuka S."/>
            <person name="Yoshikawa Y."/>
            <person name="Matsunawa H."/>
            <person name="Ichihara T."/>
            <person name="Shiohata N."/>
            <person name="Sano S."/>
            <person name="Moriya S."/>
            <person name="Momiyama H."/>
            <person name="Satoh N."/>
            <person name="Takami S."/>
            <person name="Terashima Y."/>
            <person name="Suzuki O."/>
            <person name="Nakagawa S."/>
            <person name="Senoh A."/>
            <person name="Mizoguchi H."/>
            <person name="Goto Y."/>
            <person name="Shimizu F."/>
            <person name="Wakebe H."/>
            <person name="Hishigaki H."/>
            <person name="Watanabe T."/>
            <person name="Sugiyama A."/>
            <person name="Takemoto M."/>
            <person name="Kawakami B."/>
            <person name="Yamazaki M."/>
            <person name="Watanabe K."/>
            <person name="Kumagai A."/>
            <person name="Itakura S."/>
            <person name="Fukuzumi Y."/>
            <person name="Fujimori Y."/>
            <person name="Komiyama M."/>
            <person name="Tashiro H."/>
            <person name="Tanigami A."/>
            <person name="Fujiwara T."/>
            <person name="Ono T."/>
            <person name="Yamada K."/>
            <person name="Fujii Y."/>
            <person name="Ozaki K."/>
            <person name="Hirao M."/>
            <person name="Ohmori Y."/>
            <person name="Kawabata A."/>
            <person name="Hikiji T."/>
            <person name="Kobatake N."/>
            <person name="Inagaki H."/>
            <person name="Ikema Y."/>
            <person name="Okamoto S."/>
            <person name="Okitani R."/>
            <person name="Kawakami T."/>
            <person name="Noguchi S."/>
            <person name="Itoh T."/>
            <person name="Shigeta K."/>
            <person name="Senba T."/>
            <person name="Matsumura K."/>
            <person name="Nakajima Y."/>
            <person name="Mizuno T."/>
            <person name="Morinaga M."/>
            <person name="Sasaki M."/>
            <person name="Togashi T."/>
            <person name="Oyama M."/>
            <person name="Hata H."/>
            <person name="Watanabe M."/>
            <person name="Komatsu T."/>
            <person name="Mizushima-Sugano J."/>
            <person name="Satoh T."/>
            <person name="Shirai Y."/>
            <person name="Takahashi Y."/>
            <person name="Nakagawa K."/>
            <person name="Okumura K."/>
            <person name="Nagase T."/>
            <person name="Nomura N."/>
            <person name="Kikuchi H."/>
            <person name="Masuho Y."/>
            <person name="Yamashita R."/>
            <person name="Nakai K."/>
            <person name="Yada T."/>
            <person name="Nakamura Y."/>
            <person name="Ohara O."/>
            <person name="Isogai T."/>
            <person name="Sugano S."/>
        </authorList>
    </citation>
    <scope>NUCLEOTIDE SEQUENCE [LARGE SCALE MRNA] (ISOFORMS 1 AND 2)</scope>
    <source>
        <tissue>Thalamus</tissue>
    </source>
</reference>
<reference key="4">
    <citation type="journal article" date="2007" name="BMC Genomics">
        <title>The full-ORF clone resource of the German cDNA consortium.</title>
        <authorList>
            <person name="Bechtel S."/>
            <person name="Rosenfelder H."/>
            <person name="Duda A."/>
            <person name="Schmidt C.P."/>
            <person name="Ernst U."/>
            <person name="Wellenreuther R."/>
            <person name="Mehrle A."/>
            <person name="Schuster C."/>
            <person name="Bahr A."/>
            <person name="Bloecker H."/>
            <person name="Heubner D."/>
            <person name="Hoerlein A."/>
            <person name="Michel G."/>
            <person name="Wedler H."/>
            <person name="Koehrer K."/>
            <person name="Ottenwaelder B."/>
            <person name="Poustka A."/>
            <person name="Wiemann S."/>
            <person name="Schupp I."/>
        </authorList>
    </citation>
    <scope>NUCLEOTIDE SEQUENCE [LARGE SCALE MRNA] (ISOFORM 1)</scope>
    <source>
        <tissue>Brain</tissue>
    </source>
</reference>
<reference key="5">
    <citation type="journal article" date="2004" name="Nature">
        <title>DNA sequence and analysis of human chromosome 9.</title>
        <authorList>
            <person name="Humphray S.J."/>
            <person name="Oliver K."/>
            <person name="Hunt A.R."/>
            <person name="Plumb R.W."/>
            <person name="Loveland J.E."/>
            <person name="Howe K.L."/>
            <person name="Andrews T.D."/>
            <person name="Searle S."/>
            <person name="Hunt S.E."/>
            <person name="Scott C.E."/>
            <person name="Jones M.C."/>
            <person name="Ainscough R."/>
            <person name="Almeida J.P."/>
            <person name="Ambrose K.D."/>
            <person name="Ashwell R.I.S."/>
            <person name="Babbage A.K."/>
            <person name="Babbage S."/>
            <person name="Bagguley C.L."/>
            <person name="Bailey J."/>
            <person name="Banerjee R."/>
            <person name="Barker D.J."/>
            <person name="Barlow K.F."/>
            <person name="Bates K."/>
            <person name="Beasley H."/>
            <person name="Beasley O."/>
            <person name="Bird C.P."/>
            <person name="Bray-Allen S."/>
            <person name="Brown A.J."/>
            <person name="Brown J.Y."/>
            <person name="Burford D."/>
            <person name="Burrill W."/>
            <person name="Burton J."/>
            <person name="Carder C."/>
            <person name="Carter N.P."/>
            <person name="Chapman J.C."/>
            <person name="Chen Y."/>
            <person name="Clarke G."/>
            <person name="Clark S.Y."/>
            <person name="Clee C.M."/>
            <person name="Clegg S."/>
            <person name="Collier R.E."/>
            <person name="Corby N."/>
            <person name="Crosier M."/>
            <person name="Cummings A.T."/>
            <person name="Davies J."/>
            <person name="Dhami P."/>
            <person name="Dunn M."/>
            <person name="Dutta I."/>
            <person name="Dyer L.W."/>
            <person name="Earthrowl M.E."/>
            <person name="Faulkner L."/>
            <person name="Fleming C.J."/>
            <person name="Frankish A."/>
            <person name="Frankland J.A."/>
            <person name="French L."/>
            <person name="Fricker D.G."/>
            <person name="Garner P."/>
            <person name="Garnett J."/>
            <person name="Ghori J."/>
            <person name="Gilbert J.G.R."/>
            <person name="Glison C."/>
            <person name="Grafham D.V."/>
            <person name="Gribble S."/>
            <person name="Griffiths C."/>
            <person name="Griffiths-Jones S."/>
            <person name="Grocock R."/>
            <person name="Guy J."/>
            <person name="Hall R.E."/>
            <person name="Hammond S."/>
            <person name="Harley J.L."/>
            <person name="Harrison E.S.I."/>
            <person name="Hart E.A."/>
            <person name="Heath P.D."/>
            <person name="Henderson C.D."/>
            <person name="Hopkins B.L."/>
            <person name="Howard P.J."/>
            <person name="Howden P.J."/>
            <person name="Huckle E."/>
            <person name="Johnson C."/>
            <person name="Johnson D."/>
            <person name="Joy A.A."/>
            <person name="Kay M."/>
            <person name="Keenan S."/>
            <person name="Kershaw J.K."/>
            <person name="Kimberley A.M."/>
            <person name="King A."/>
            <person name="Knights A."/>
            <person name="Laird G.K."/>
            <person name="Langford C."/>
            <person name="Lawlor S."/>
            <person name="Leongamornlert D.A."/>
            <person name="Leversha M."/>
            <person name="Lloyd C."/>
            <person name="Lloyd D.M."/>
            <person name="Lovell J."/>
            <person name="Martin S."/>
            <person name="Mashreghi-Mohammadi M."/>
            <person name="Matthews L."/>
            <person name="McLaren S."/>
            <person name="McLay K.E."/>
            <person name="McMurray A."/>
            <person name="Milne S."/>
            <person name="Nickerson T."/>
            <person name="Nisbett J."/>
            <person name="Nordsiek G."/>
            <person name="Pearce A.V."/>
            <person name="Peck A.I."/>
            <person name="Porter K.M."/>
            <person name="Pandian R."/>
            <person name="Pelan S."/>
            <person name="Phillimore B."/>
            <person name="Povey S."/>
            <person name="Ramsey Y."/>
            <person name="Rand V."/>
            <person name="Scharfe M."/>
            <person name="Sehra H.K."/>
            <person name="Shownkeen R."/>
            <person name="Sims S.K."/>
            <person name="Skuce C.D."/>
            <person name="Smith M."/>
            <person name="Steward C.A."/>
            <person name="Swarbreck D."/>
            <person name="Sycamore N."/>
            <person name="Tester J."/>
            <person name="Thorpe A."/>
            <person name="Tracey A."/>
            <person name="Tromans A."/>
            <person name="Thomas D.W."/>
            <person name="Wall M."/>
            <person name="Wallis J.M."/>
            <person name="West A.P."/>
            <person name="Whitehead S.L."/>
            <person name="Willey D.L."/>
            <person name="Williams S.A."/>
            <person name="Wilming L."/>
            <person name="Wray P.W."/>
            <person name="Young L."/>
            <person name="Ashurst J.L."/>
            <person name="Coulson A."/>
            <person name="Blocker H."/>
            <person name="Durbin R.M."/>
            <person name="Sulston J.E."/>
            <person name="Hubbard T."/>
            <person name="Jackson M.J."/>
            <person name="Bentley D.R."/>
            <person name="Beck S."/>
            <person name="Rogers J."/>
            <person name="Dunham I."/>
        </authorList>
    </citation>
    <scope>NUCLEOTIDE SEQUENCE [LARGE SCALE GENOMIC DNA]</scope>
</reference>
<reference key="6">
    <citation type="submission" date="2005-07" db="EMBL/GenBank/DDBJ databases">
        <authorList>
            <person name="Mural R.J."/>
            <person name="Istrail S."/>
            <person name="Sutton G."/>
            <person name="Florea L."/>
            <person name="Halpern A.L."/>
            <person name="Mobarry C.M."/>
            <person name="Lippert R."/>
            <person name="Walenz B."/>
            <person name="Shatkay H."/>
            <person name="Dew I."/>
            <person name="Miller J.R."/>
            <person name="Flanigan M.J."/>
            <person name="Edwards N.J."/>
            <person name="Bolanos R."/>
            <person name="Fasulo D."/>
            <person name="Halldorsson B.V."/>
            <person name="Hannenhalli S."/>
            <person name="Turner R."/>
            <person name="Yooseph S."/>
            <person name="Lu F."/>
            <person name="Nusskern D.R."/>
            <person name="Shue B.C."/>
            <person name="Zheng X.H."/>
            <person name="Zhong F."/>
            <person name="Delcher A.L."/>
            <person name="Huson D.H."/>
            <person name="Kravitz S.A."/>
            <person name="Mouchard L."/>
            <person name="Reinert K."/>
            <person name="Remington K.A."/>
            <person name="Clark A.G."/>
            <person name="Waterman M.S."/>
            <person name="Eichler E.E."/>
            <person name="Adams M.D."/>
            <person name="Hunkapiller M.W."/>
            <person name="Myers E.W."/>
            <person name="Venter J.C."/>
        </authorList>
    </citation>
    <scope>NUCLEOTIDE SEQUENCE [LARGE SCALE GENOMIC DNA]</scope>
</reference>
<reference key="7">
    <citation type="journal article" date="2004" name="Genome Res.">
        <title>The status, quality, and expansion of the NIH full-length cDNA project: the Mammalian Gene Collection (MGC).</title>
        <authorList>
            <consortium name="The MGC Project Team"/>
        </authorList>
    </citation>
    <scope>NUCLEOTIDE SEQUENCE [LARGE SCALE MRNA] (ISOFORM 1)</scope>
    <source>
        <tissue>Cervix</tissue>
        <tissue>Uterus</tissue>
    </source>
</reference>
<reference key="8">
    <citation type="journal article" date="2012" name="Mol. Biol. Cell">
        <title>The human mitochondrial ISCA1, ISCA2, and IBA57 proteins are required for [4Fe-4S] protein maturation.</title>
        <authorList>
            <person name="Sheftel A.D."/>
            <person name="Wilbrecht C."/>
            <person name="Stehling O."/>
            <person name="Niggemeyer B."/>
            <person name="Elsasser H.P."/>
            <person name="Muhlenhoff U."/>
            <person name="Lill R."/>
        </authorList>
    </citation>
    <scope>FUNCTION</scope>
    <scope>SUBCELLULAR LOCATION</scope>
</reference>
<reference key="9">
    <citation type="journal article" date="2016" name="Nat. Mater.">
        <title>A magnetic protein biocompass.</title>
        <authorList>
            <person name="Qin S."/>
            <person name="Yin H."/>
            <person name="Yang C."/>
            <person name="Dou Y."/>
            <person name="Liu Z."/>
            <person name="Zhang P."/>
            <person name="Yu H."/>
            <person name="Huang Y."/>
            <person name="Feng J."/>
            <person name="Hao J."/>
            <person name="Hao J."/>
            <person name="Deng L."/>
            <person name="Yan X."/>
            <person name="Dong X."/>
            <person name="Zhao Z."/>
            <person name="Jiang T."/>
            <person name="Wang H.W."/>
            <person name="Luo S.J."/>
            <person name="Xie C."/>
        </authorList>
    </citation>
    <scope>INTERACTION WITH CRY2</scope>
</reference>
<reference key="10">
    <citation type="journal article" date="2017" name="J. Hum. Genet.">
        <title>Homozygous p.(Glu87Lys) variant in ISCA1 is associated with a multiple mitochondrial dysfunctions syndrome.</title>
        <authorList>
            <person name="Shukla A."/>
            <person name="Hebbar M."/>
            <person name="Srivastava A."/>
            <person name="Kadavigere R."/>
            <person name="Upadhyai P."/>
            <person name="Kanthi A."/>
            <person name="Brandau O."/>
            <person name="Bielas S."/>
            <person name="Girisha K.M."/>
        </authorList>
    </citation>
    <scope>VARIANT MMDS5 LYS-87</scope>
</reference>
<comment type="function">
    <text evidence="3 4">Involved in the maturation of mitochondrial 4Fe-4S proteins functioning late in the iron-sulfur cluster assembly pathway. Probably involved in the binding of an intermediate of Fe/S cluster assembly.</text>
</comment>
<comment type="subunit">
    <text evidence="5">Interacts with CRY2, but not with CRY1 (in vitro).</text>
</comment>
<comment type="interaction">
    <interactant intactId="EBI-2866528">
        <id>Q9BUE6</id>
    </interactant>
    <interactant intactId="EBI-10258659">
        <id>Q86U28</id>
        <label>ISCA2</label>
    </interactant>
    <organismsDiffer>false</organismsDiffer>
    <experiments>6</experiments>
</comment>
<comment type="subcellular location">
    <subcellularLocation>
        <location evidence="3 4">Mitochondrion</location>
    </subcellularLocation>
</comment>
<comment type="alternative products">
    <event type="alternative splicing"/>
    <isoform>
        <id>Q9BUE6-1</id>
        <name>1</name>
        <sequence type="displayed"/>
    </isoform>
    <isoform>
        <id>Q9BUE6-2</id>
        <name>2</name>
        <sequence type="described" ref="VSP_057035"/>
    </isoform>
</comment>
<comment type="tissue specificity">
    <text evidence="3">Detected in cerebellum, kidney and heart.</text>
</comment>
<comment type="disease" evidence="6">
    <disease id="DI-05070">
        <name>Multiple mitochondrial dysfunctions syndrome 5</name>
        <acronym>MMDS5</acronym>
        <description>An autosomal recessive, severe disorder characterized by early onset neurological deterioration, seizures, cerebral and cerebellar leukodystrophy, dysmyelination, cortical migrational abnormalities, lactic acidosis and early demise.</description>
        <dbReference type="MIM" id="617613"/>
    </disease>
    <text>The disease is caused by variants affecting the gene represented in this entry.</text>
</comment>
<comment type="similarity">
    <text evidence="8">Belongs to the HesB/IscA family.</text>
</comment>
<comment type="sequence caution" evidence="8">
    <conflict type="erroneous initiation">
        <sequence resource="EMBL-CDS" id="AAG59854"/>
    </conflict>
</comment>
<comment type="sequence caution" evidence="8">
    <conflict type="erroneous initiation">
        <sequence resource="EMBL-CDS" id="CAD39021"/>
    </conflict>
</comment>
<sequence>MSASLVRATVRAVSKRKLQPTRAALTLTPSAVNKIKQLLKDKPEHVGVKVGVRTRGCNGLSYTLEYTKTKGDSDEEVIQDGVRVFIEKKAQLTLLGTEMDYVEDKLSSEFVFNNPNIKGTCGCGESFNI</sequence>
<proteinExistence type="evidence at protein level"/>
<evidence type="ECO:0000250" key="1">
    <source>
        <dbReference type="UniProtKB" id="P0AAC8"/>
    </source>
</evidence>
<evidence type="ECO:0000255" key="2"/>
<evidence type="ECO:0000269" key="3">
    <source>
    </source>
</evidence>
<evidence type="ECO:0000269" key="4">
    <source>
    </source>
</evidence>
<evidence type="ECO:0000269" key="5">
    <source>
    </source>
</evidence>
<evidence type="ECO:0000269" key="6">
    <source>
    </source>
</evidence>
<evidence type="ECO:0000303" key="7">
    <source>
    </source>
</evidence>
<evidence type="ECO:0000305" key="8"/>
<name>ISCA1_HUMAN</name>
<keyword id="KW-0025">Alternative splicing</keyword>
<keyword id="KW-0225">Disease variant</keyword>
<keyword id="KW-0408">Iron</keyword>
<keyword id="KW-0411">Iron-sulfur</keyword>
<keyword id="KW-0479">Metal-binding</keyword>
<keyword id="KW-0496">Mitochondrion</keyword>
<keyword id="KW-1267">Proteomics identification</keyword>
<keyword id="KW-1185">Reference proteome</keyword>
<keyword id="KW-0809">Transit peptide</keyword>
<gene>
    <name type="primary">ISCA1</name>
    <name type="synonym">HBLD2</name>
    <name type="ORF">GK004</name>
</gene>
<feature type="transit peptide" description="Mitochondrion" evidence="2">
    <location>
        <begin position="1"/>
        <end position="12"/>
    </location>
</feature>
<feature type="chain" id="PRO_0000042734" description="Iron-sulfur cluster assembly 1 homolog, mitochondrial">
    <location>
        <begin position="13"/>
        <end position="129"/>
    </location>
</feature>
<feature type="binding site" evidence="1">
    <location>
        <position position="57"/>
    </location>
    <ligand>
        <name>Fe cation</name>
        <dbReference type="ChEBI" id="CHEBI:24875"/>
    </ligand>
</feature>
<feature type="binding site" evidence="1">
    <location>
        <position position="121"/>
    </location>
    <ligand>
        <name>Fe cation</name>
        <dbReference type="ChEBI" id="CHEBI:24875"/>
    </ligand>
</feature>
<feature type="binding site" evidence="1">
    <location>
        <position position="123"/>
    </location>
    <ligand>
        <name>Fe cation</name>
        <dbReference type="ChEBI" id="CHEBI:24875"/>
    </ligand>
</feature>
<feature type="splice variant" id="VSP_057035" description="In isoform 2." evidence="7">
    <original>M</original>
    <variation>MVAAGGGARTEGAVRRSLWRQCARRVHGEKLRRPTFGPRHRGAGTAKM</variation>
    <location>
        <position position="1"/>
    </location>
</feature>
<feature type="sequence variant" id="VAR_079296" description="In MMDS5; uncertain significance; dbSNP:rs776679653." evidence="6">
    <original>E</original>
    <variation>K</variation>
    <location>
        <position position="87"/>
    </location>
</feature>
<protein>
    <recommendedName>
        <fullName>Iron-sulfur cluster assembly 1 homolog, mitochondrial</fullName>
    </recommendedName>
    <alternativeName>
        <fullName>HESB-like domain-containing protein 2</fullName>
    </alternativeName>
    <alternativeName>
        <fullName>Iron-sulfur assembly protein IscA</fullName>
        <shortName>hIscA</shortName>
    </alternativeName>
</protein>
<organism>
    <name type="scientific">Homo sapiens</name>
    <name type="common">Human</name>
    <dbReference type="NCBI Taxonomy" id="9606"/>
    <lineage>
        <taxon>Eukaryota</taxon>
        <taxon>Metazoa</taxon>
        <taxon>Chordata</taxon>
        <taxon>Craniata</taxon>
        <taxon>Vertebrata</taxon>
        <taxon>Euteleostomi</taxon>
        <taxon>Mammalia</taxon>
        <taxon>Eutheria</taxon>
        <taxon>Euarchontoglires</taxon>
        <taxon>Primates</taxon>
        <taxon>Haplorrhini</taxon>
        <taxon>Catarrhini</taxon>
        <taxon>Hominidae</taxon>
        <taxon>Homo</taxon>
    </lineage>
</organism>